<reference key="1">
    <citation type="journal article" date="1998" name="Science">
        <title>Genome sequence of the nematode C. elegans: a platform for investigating biology.</title>
        <authorList>
            <consortium name="The C. elegans sequencing consortium"/>
        </authorList>
    </citation>
    <scope>NUCLEOTIDE SEQUENCE [LARGE SCALE GENOMIC DNA]</scope>
    <source>
        <strain>Bristol N2</strain>
    </source>
</reference>
<keyword id="KW-1015">Disulfide bond</keyword>
<keyword id="KW-0249">Electron transport</keyword>
<keyword id="KW-0676">Redox-active center</keyword>
<keyword id="KW-1185">Reference proteome</keyword>
<keyword id="KW-0813">Transport</keyword>
<gene>
    <name type="primary">trx-2</name>
    <name type="ORF">B0024.9</name>
</gene>
<organism>
    <name type="scientific">Caenorhabditis elegans</name>
    <dbReference type="NCBI Taxonomy" id="6239"/>
    <lineage>
        <taxon>Eukaryota</taxon>
        <taxon>Metazoa</taxon>
        <taxon>Ecdysozoa</taxon>
        <taxon>Nematoda</taxon>
        <taxon>Chromadorea</taxon>
        <taxon>Rhabditida</taxon>
        <taxon>Rhabditina</taxon>
        <taxon>Rhabditomorpha</taxon>
        <taxon>Rhabditoidea</taxon>
        <taxon>Rhabditidae</taxon>
        <taxon>Peloderinae</taxon>
        <taxon>Caenorhabditis</taxon>
    </lineage>
</organism>
<feature type="chain" id="PRO_0000120028" description="Probable thioredoxin-2">
    <location>
        <begin position="1"/>
        <end position="145"/>
    </location>
</feature>
<feature type="domain" description="Thioredoxin" evidence="2">
    <location>
        <begin position="39"/>
        <end position="144"/>
    </location>
</feature>
<feature type="active site" description="Nucleophile" evidence="1">
    <location>
        <position position="68"/>
    </location>
</feature>
<feature type="active site" description="Nucleophile" evidence="1">
    <location>
        <position position="71"/>
    </location>
</feature>
<feature type="site" description="Deprotonates C-terminal active site Cys" evidence="1">
    <location>
        <position position="62"/>
    </location>
</feature>
<feature type="site" description="Contributes to redox potential value" evidence="1">
    <location>
        <position position="69"/>
    </location>
</feature>
<feature type="site" description="Contributes to redox potential value" evidence="1">
    <location>
        <position position="70"/>
    </location>
</feature>
<feature type="disulfide bond" description="Redox-active" evidence="2">
    <location>
        <begin position="68"/>
        <end position="71"/>
    </location>
</feature>
<dbReference type="EMBL" id="Z71178">
    <property type="protein sequence ID" value="CAA94881.2"/>
    <property type="molecule type" value="Genomic_DNA"/>
</dbReference>
<dbReference type="PIR" id="T18644">
    <property type="entry name" value="T18644"/>
</dbReference>
<dbReference type="RefSeq" id="NP_001256207.1">
    <property type="nucleotide sequence ID" value="NM_001269278.2"/>
</dbReference>
<dbReference type="SMR" id="Q17424"/>
<dbReference type="BioGRID" id="44464">
    <property type="interactions" value="2"/>
</dbReference>
<dbReference type="FunCoup" id="Q17424">
    <property type="interactions" value="1534"/>
</dbReference>
<dbReference type="IntAct" id="Q17424">
    <property type="interactions" value="1"/>
</dbReference>
<dbReference type="STRING" id="6239.B0024.9a.2"/>
<dbReference type="PaxDb" id="6239-B0024.9a"/>
<dbReference type="EnsemblMetazoa" id="B0024.9a.1">
    <property type="protein sequence ID" value="B0024.9a.1"/>
    <property type="gene ID" value="WBGene00007099"/>
</dbReference>
<dbReference type="GeneID" id="179434"/>
<dbReference type="KEGG" id="cel:CELE_B0024.9"/>
<dbReference type="UCSC" id="B0024.9">
    <property type="organism name" value="c. elegans"/>
</dbReference>
<dbReference type="AGR" id="WB:WBGene00007099"/>
<dbReference type="CTD" id="179434"/>
<dbReference type="WormBase" id="B0024.9a">
    <property type="protein sequence ID" value="CE42941"/>
    <property type="gene ID" value="WBGene00007099"/>
    <property type="gene designation" value="trx-2"/>
</dbReference>
<dbReference type="eggNOG" id="KOG0910">
    <property type="taxonomic scope" value="Eukaryota"/>
</dbReference>
<dbReference type="GeneTree" id="ENSGT00530000064086"/>
<dbReference type="HOGENOM" id="CLU_090389_11_1_1"/>
<dbReference type="InParanoid" id="Q17424"/>
<dbReference type="OMA" id="TVMAFRR"/>
<dbReference type="OrthoDB" id="19690at2759"/>
<dbReference type="PhylomeDB" id="Q17424"/>
<dbReference type="Reactome" id="R-CEL-1614558">
    <property type="pathway name" value="Degradation of cysteine and homocysteine"/>
</dbReference>
<dbReference type="Reactome" id="R-CEL-3299685">
    <property type="pathway name" value="Detoxification of Reactive Oxygen Species"/>
</dbReference>
<dbReference type="PRO" id="PR:Q17424"/>
<dbReference type="Proteomes" id="UP000001940">
    <property type="component" value="Chromosome V"/>
</dbReference>
<dbReference type="Bgee" id="WBGene00007099">
    <property type="expression patterns" value="Expressed in germ line (C elegans) and 4 other cell types or tissues"/>
</dbReference>
<dbReference type="ExpressionAtlas" id="Q17424">
    <property type="expression patterns" value="baseline and differential"/>
</dbReference>
<dbReference type="GO" id="GO:0005739">
    <property type="term" value="C:mitochondrion"/>
    <property type="evidence" value="ECO:0000314"/>
    <property type="project" value="WormBase"/>
</dbReference>
<dbReference type="GO" id="GO:0045454">
    <property type="term" value="P:cell redox homeostasis"/>
    <property type="evidence" value="ECO:0000318"/>
    <property type="project" value="GO_Central"/>
</dbReference>
<dbReference type="CDD" id="cd02947">
    <property type="entry name" value="TRX_family"/>
    <property type="match status" value="1"/>
</dbReference>
<dbReference type="FunFam" id="3.40.30.10:FF:000001">
    <property type="entry name" value="Thioredoxin"/>
    <property type="match status" value="1"/>
</dbReference>
<dbReference type="Gene3D" id="3.40.30.10">
    <property type="entry name" value="Glutaredoxin"/>
    <property type="match status" value="1"/>
</dbReference>
<dbReference type="InterPro" id="IPR036249">
    <property type="entry name" value="Thioredoxin-like_sf"/>
</dbReference>
<dbReference type="InterPro" id="IPR017937">
    <property type="entry name" value="Thioredoxin_CS"/>
</dbReference>
<dbReference type="InterPro" id="IPR013766">
    <property type="entry name" value="Thioredoxin_domain"/>
</dbReference>
<dbReference type="PANTHER" id="PTHR43601">
    <property type="entry name" value="THIOREDOXIN, MITOCHONDRIAL"/>
    <property type="match status" value="1"/>
</dbReference>
<dbReference type="PANTHER" id="PTHR43601:SF3">
    <property type="entry name" value="THIOREDOXIN, MITOCHONDRIAL"/>
    <property type="match status" value="1"/>
</dbReference>
<dbReference type="Pfam" id="PF00085">
    <property type="entry name" value="Thioredoxin"/>
    <property type="match status" value="1"/>
</dbReference>
<dbReference type="PRINTS" id="PR00421">
    <property type="entry name" value="THIOREDOXIN"/>
</dbReference>
<dbReference type="SUPFAM" id="SSF52833">
    <property type="entry name" value="Thioredoxin-like"/>
    <property type="match status" value="1"/>
</dbReference>
<dbReference type="PROSITE" id="PS00194">
    <property type="entry name" value="THIOREDOXIN_1"/>
    <property type="match status" value="1"/>
</dbReference>
<dbReference type="PROSITE" id="PS51352">
    <property type="entry name" value="THIOREDOXIN_2"/>
    <property type="match status" value="1"/>
</dbReference>
<name>THIO2_CAEEL</name>
<evidence type="ECO:0000250" key="1"/>
<evidence type="ECO:0000255" key="2">
    <source>
        <dbReference type="PROSITE-ProRule" id="PRU00691"/>
    </source>
</evidence>
<evidence type="ECO:0000305" key="3"/>
<sequence>MQKALKLGSFFARSAISVKPTLATSKMTQLRHFSHGASVFDIDSVEDFTEKVIQSSVPVIVDFHAEWCGPCQALGPRLEEKVNGRQGSVLLAKINVDHAGELAMDYGISAVPTVFAFKNGEKISGFSGVLDDEQLDDFIEDVLAA</sequence>
<accession>Q17424</accession>
<proteinExistence type="inferred from homology"/>
<protein>
    <recommendedName>
        <fullName>Probable thioredoxin-2</fullName>
    </recommendedName>
</protein>
<comment type="function">
    <text evidence="1">Participates in various redox reactions through the reversible oxidation of its active center dithiol to a disulfide and catalyzes dithiol-disulfide exchange reactions.</text>
</comment>
<comment type="similarity">
    <text evidence="3">Belongs to the thioredoxin family.</text>
</comment>